<sequence>MANILKKWIESDRRELRRINKIANKVESYAKQMSELTDEQLQAKTDEFRERYKKGESLDHMLPEAFAVSREGAKRVLGLYPFHVQIMGGIVLHEGNIAEMRTGEGKTLTATMPVYLNAISGKGVHVITVNEYLSKRDATEMGQLYNWLGCSVGINNSEMSPDQKREAYKADIMYSTNSEIGFDYLRDNMAVYKEDQVQRGLNYALVDEVDSILIDEARTPLIISGPGTGTSKLYKQTDRFVKQLKKDVDYKIDLESKTVSLTDEGIKKAEKYFNLKNLYDPENTALTHHLDQALRANYIMLLDKDYVVQDGEVLIVDSFTGRVMEGRRFSDGLHQAIEAKEGVEIQEENKTMANITYQNLFRMYNKLAGMTGTAKTEQEEFREIYNMETITIPTNRPVQRKDEPDLLYPTLQSKFAAVVDRIKKLHAKGQPILVGTVAVETSEYLSQLLDKENIPHVVLNAKNHAKEAEIVKNAGQKGAVTIATNMAGRGTDIKLGPGVREIGGLAVIGTERHESRRIDNQLRGRSGRQGDPGLSQFYLSLEDDLMKRFGGDRIKAFLERMKVNDEDAVIKSRFLTHQVESAQKRVEGNNYDSRKNVLQYDDVMREQREIIYKERQQIITEDKSLKWVLMPMFRRTIQREVDQHTLGDKKDWDLQGIVDFAEEVLIKPDTITVKDLEGKSPQEMVDYLMTFAQGVYKEKQKQLYDPAQMLEFEKVVILRVVDSHWTDHIDIMDQFRQSVGLRGYGQLNPLVEYQTAGYHMFEQMIADIEYETTRLFMKSEIRQNVTR</sequence>
<reference key="1">
    <citation type="journal article" date="2008" name="DNA Res.">
        <title>Comparative genome analysis of Lactobacillus reuteri and Lactobacillus fermentum reveal a genomic island for reuterin and cobalamin production.</title>
        <authorList>
            <person name="Morita H."/>
            <person name="Toh H."/>
            <person name="Fukuda S."/>
            <person name="Horikawa H."/>
            <person name="Oshima K."/>
            <person name="Suzuki T."/>
            <person name="Murakami M."/>
            <person name="Hisamatsu S."/>
            <person name="Kato Y."/>
            <person name="Takizawa T."/>
            <person name="Fukuoka H."/>
            <person name="Yoshimura T."/>
            <person name="Itoh K."/>
            <person name="O'Sullivan D.J."/>
            <person name="McKay L.L."/>
            <person name="Ohno H."/>
            <person name="Kikuchi J."/>
            <person name="Masaoka T."/>
            <person name="Hattori M."/>
        </authorList>
    </citation>
    <scope>NUCLEOTIDE SEQUENCE [LARGE SCALE GENOMIC DNA]</scope>
    <source>
        <strain>JCM 1112</strain>
    </source>
</reference>
<organism>
    <name type="scientific">Limosilactobacillus reuteri subsp. reuteri (strain JCM 1112)</name>
    <name type="common">Lactobacillus reuteri</name>
    <dbReference type="NCBI Taxonomy" id="557433"/>
    <lineage>
        <taxon>Bacteria</taxon>
        <taxon>Bacillati</taxon>
        <taxon>Bacillota</taxon>
        <taxon>Bacilli</taxon>
        <taxon>Lactobacillales</taxon>
        <taxon>Lactobacillaceae</taxon>
        <taxon>Limosilactobacillus</taxon>
    </lineage>
</organism>
<dbReference type="EC" id="7.4.2.8" evidence="1"/>
<dbReference type="EMBL" id="AP007281">
    <property type="protein sequence ID" value="BAG24870.1"/>
    <property type="molecule type" value="Genomic_DNA"/>
</dbReference>
<dbReference type="RefSeq" id="WP_003666386.1">
    <property type="nucleotide sequence ID" value="NC_010609.1"/>
</dbReference>
<dbReference type="SMR" id="B2G5Y8"/>
<dbReference type="GeneID" id="77190169"/>
<dbReference type="KEGG" id="lrf:LAR_0354"/>
<dbReference type="HOGENOM" id="CLU_005314_3_2_9"/>
<dbReference type="GO" id="GO:0031522">
    <property type="term" value="C:cell envelope Sec protein transport complex"/>
    <property type="evidence" value="ECO:0007669"/>
    <property type="project" value="TreeGrafter"/>
</dbReference>
<dbReference type="GO" id="GO:0005829">
    <property type="term" value="C:cytosol"/>
    <property type="evidence" value="ECO:0007669"/>
    <property type="project" value="TreeGrafter"/>
</dbReference>
<dbReference type="GO" id="GO:0005886">
    <property type="term" value="C:plasma membrane"/>
    <property type="evidence" value="ECO:0007669"/>
    <property type="project" value="UniProtKB-SubCell"/>
</dbReference>
<dbReference type="GO" id="GO:0005524">
    <property type="term" value="F:ATP binding"/>
    <property type="evidence" value="ECO:0007669"/>
    <property type="project" value="UniProtKB-UniRule"/>
</dbReference>
<dbReference type="GO" id="GO:0008564">
    <property type="term" value="F:protein-exporting ATPase activity"/>
    <property type="evidence" value="ECO:0007669"/>
    <property type="project" value="UniProtKB-EC"/>
</dbReference>
<dbReference type="GO" id="GO:0065002">
    <property type="term" value="P:intracellular protein transmembrane transport"/>
    <property type="evidence" value="ECO:0007669"/>
    <property type="project" value="UniProtKB-UniRule"/>
</dbReference>
<dbReference type="GO" id="GO:0017038">
    <property type="term" value="P:protein import"/>
    <property type="evidence" value="ECO:0007669"/>
    <property type="project" value="InterPro"/>
</dbReference>
<dbReference type="GO" id="GO:0006605">
    <property type="term" value="P:protein targeting"/>
    <property type="evidence" value="ECO:0007669"/>
    <property type="project" value="UniProtKB-UniRule"/>
</dbReference>
<dbReference type="GO" id="GO:0043952">
    <property type="term" value="P:protein transport by the Sec complex"/>
    <property type="evidence" value="ECO:0007669"/>
    <property type="project" value="TreeGrafter"/>
</dbReference>
<dbReference type="CDD" id="cd17928">
    <property type="entry name" value="DEXDc_SecA"/>
    <property type="match status" value="1"/>
</dbReference>
<dbReference type="CDD" id="cd18803">
    <property type="entry name" value="SF2_C_secA"/>
    <property type="match status" value="1"/>
</dbReference>
<dbReference type="FunFam" id="3.40.50.300:FF:000429">
    <property type="entry name" value="Preprotein translocase subunit SecA"/>
    <property type="match status" value="1"/>
</dbReference>
<dbReference type="FunFam" id="3.90.1440.10:FF:000001">
    <property type="entry name" value="Preprotein translocase subunit SecA"/>
    <property type="match status" value="1"/>
</dbReference>
<dbReference type="Gene3D" id="1.10.3060.10">
    <property type="entry name" value="Helical scaffold and wing domains of SecA"/>
    <property type="match status" value="1"/>
</dbReference>
<dbReference type="Gene3D" id="3.40.50.300">
    <property type="entry name" value="P-loop containing nucleotide triphosphate hydrolases"/>
    <property type="match status" value="2"/>
</dbReference>
<dbReference type="Gene3D" id="3.90.1440.10">
    <property type="entry name" value="SecA, preprotein cross-linking domain"/>
    <property type="match status" value="1"/>
</dbReference>
<dbReference type="HAMAP" id="MF_01382">
    <property type="entry name" value="SecA"/>
    <property type="match status" value="1"/>
</dbReference>
<dbReference type="InterPro" id="IPR014001">
    <property type="entry name" value="Helicase_ATP-bd"/>
</dbReference>
<dbReference type="InterPro" id="IPR001650">
    <property type="entry name" value="Helicase_C-like"/>
</dbReference>
<dbReference type="InterPro" id="IPR027417">
    <property type="entry name" value="P-loop_NTPase"/>
</dbReference>
<dbReference type="InterPro" id="IPR000185">
    <property type="entry name" value="SecA"/>
</dbReference>
<dbReference type="InterPro" id="IPR020937">
    <property type="entry name" value="SecA_CS"/>
</dbReference>
<dbReference type="InterPro" id="IPR011115">
    <property type="entry name" value="SecA_DEAD"/>
</dbReference>
<dbReference type="InterPro" id="IPR014018">
    <property type="entry name" value="SecA_motor_DEAD"/>
</dbReference>
<dbReference type="InterPro" id="IPR011130">
    <property type="entry name" value="SecA_preprotein_X-link_dom"/>
</dbReference>
<dbReference type="InterPro" id="IPR044722">
    <property type="entry name" value="SecA_SF2_C"/>
</dbReference>
<dbReference type="InterPro" id="IPR011116">
    <property type="entry name" value="SecA_Wing/Scaffold"/>
</dbReference>
<dbReference type="InterPro" id="IPR036266">
    <property type="entry name" value="SecA_Wing/Scaffold_sf"/>
</dbReference>
<dbReference type="InterPro" id="IPR036670">
    <property type="entry name" value="SecA_X-link_sf"/>
</dbReference>
<dbReference type="NCBIfam" id="NF006630">
    <property type="entry name" value="PRK09200.1"/>
    <property type="match status" value="1"/>
</dbReference>
<dbReference type="NCBIfam" id="NF009538">
    <property type="entry name" value="PRK12904.1"/>
    <property type="match status" value="1"/>
</dbReference>
<dbReference type="NCBIfam" id="TIGR00963">
    <property type="entry name" value="secA"/>
    <property type="match status" value="1"/>
</dbReference>
<dbReference type="PANTHER" id="PTHR30612:SF0">
    <property type="entry name" value="CHLOROPLAST PROTEIN-TRANSPORTING ATPASE"/>
    <property type="match status" value="1"/>
</dbReference>
<dbReference type="PANTHER" id="PTHR30612">
    <property type="entry name" value="SECA INNER MEMBRANE COMPONENT OF SEC PROTEIN SECRETION SYSTEM"/>
    <property type="match status" value="1"/>
</dbReference>
<dbReference type="Pfam" id="PF21090">
    <property type="entry name" value="P-loop_SecA"/>
    <property type="match status" value="2"/>
</dbReference>
<dbReference type="Pfam" id="PF07517">
    <property type="entry name" value="SecA_DEAD"/>
    <property type="match status" value="1"/>
</dbReference>
<dbReference type="Pfam" id="PF01043">
    <property type="entry name" value="SecA_PP_bind"/>
    <property type="match status" value="1"/>
</dbReference>
<dbReference type="Pfam" id="PF07516">
    <property type="entry name" value="SecA_SW"/>
    <property type="match status" value="1"/>
</dbReference>
<dbReference type="PRINTS" id="PR00906">
    <property type="entry name" value="SECA"/>
</dbReference>
<dbReference type="SMART" id="SM00957">
    <property type="entry name" value="SecA_DEAD"/>
    <property type="match status" value="1"/>
</dbReference>
<dbReference type="SMART" id="SM00958">
    <property type="entry name" value="SecA_PP_bind"/>
    <property type="match status" value="1"/>
</dbReference>
<dbReference type="SUPFAM" id="SSF81886">
    <property type="entry name" value="Helical scaffold and wing domains of SecA"/>
    <property type="match status" value="1"/>
</dbReference>
<dbReference type="SUPFAM" id="SSF52540">
    <property type="entry name" value="P-loop containing nucleoside triphosphate hydrolases"/>
    <property type="match status" value="2"/>
</dbReference>
<dbReference type="SUPFAM" id="SSF81767">
    <property type="entry name" value="Pre-protein crosslinking domain of SecA"/>
    <property type="match status" value="1"/>
</dbReference>
<dbReference type="PROSITE" id="PS01312">
    <property type="entry name" value="SECA"/>
    <property type="match status" value="1"/>
</dbReference>
<dbReference type="PROSITE" id="PS51196">
    <property type="entry name" value="SECA_MOTOR_DEAD"/>
    <property type="match status" value="1"/>
</dbReference>
<accession>B2G5Y8</accession>
<proteinExistence type="inferred from homology"/>
<keyword id="KW-0067">ATP-binding</keyword>
<keyword id="KW-1003">Cell membrane</keyword>
<keyword id="KW-0963">Cytoplasm</keyword>
<keyword id="KW-0472">Membrane</keyword>
<keyword id="KW-0547">Nucleotide-binding</keyword>
<keyword id="KW-0653">Protein transport</keyword>
<keyword id="KW-1278">Translocase</keyword>
<keyword id="KW-0811">Translocation</keyword>
<keyword id="KW-0813">Transport</keyword>
<gene>
    <name evidence="1" type="primary">secA</name>
    <name type="ordered locus">LAR_0354</name>
</gene>
<comment type="function">
    <text evidence="1">Part of the Sec protein translocase complex. Interacts with the SecYEG preprotein conducting channel. Has a central role in coupling the hydrolysis of ATP to the transfer of proteins into and across the cell membrane, serving as an ATP-driven molecular motor driving the stepwise translocation of polypeptide chains across the membrane.</text>
</comment>
<comment type="catalytic activity">
    <reaction evidence="1">
        <text>ATP + H2O + cellular proteinSide 1 = ADP + phosphate + cellular proteinSide 2.</text>
        <dbReference type="EC" id="7.4.2.8"/>
    </reaction>
</comment>
<comment type="subunit">
    <text evidence="1">Monomer and homodimer. Part of the essential Sec protein translocation apparatus which comprises SecA, SecYEG and auxiliary proteins SecDF. Other proteins may also be involved.</text>
</comment>
<comment type="subcellular location">
    <subcellularLocation>
        <location evidence="1">Cell membrane</location>
        <topology evidence="1">Peripheral membrane protein</topology>
        <orientation evidence="1">Cytoplasmic side</orientation>
    </subcellularLocation>
    <subcellularLocation>
        <location evidence="1">Cytoplasm</location>
    </subcellularLocation>
    <text evidence="1">Distribution is 50-50.</text>
</comment>
<comment type="similarity">
    <text evidence="1">Belongs to the SecA family.</text>
</comment>
<feature type="chain" id="PRO_1000145029" description="Protein translocase subunit SecA">
    <location>
        <begin position="1"/>
        <end position="787"/>
    </location>
</feature>
<feature type="binding site" evidence="1">
    <location>
        <position position="85"/>
    </location>
    <ligand>
        <name>ATP</name>
        <dbReference type="ChEBI" id="CHEBI:30616"/>
    </ligand>
</feature>
<feature type="binding site" evidence="1">
    <location>
        <begin position="103"/>
        <end position="107"/>
    </location>
    <ligand>
        <name>ATP</name>
        <dbReference type="ChEBI" id="CHEBI:30616"/>
    </ligand>
</feature>
<feature type="binding site" evidence="1">
    <location>
        <position position="492"/>
    </location>
    <ligand>
        <name>ATP</name>
        <dbReference type="ChEBI" id="CHEBI:30616"/>
    </ligand>
</feature>
<evidence type="ECO:0000255" key="1">
    <source>
        <dbReference type="HAMAP-Rule" id="MF_01382"/>
    </source>
</evidence>
<protein>
    <recommendedName>
        <fullName evidence="1">Protein translocase subunit SecA</fullName>
        <ecNumber evidence="1">7.4.2.8</ecNumber>
    </recommendedName>
</protein>
<name>SECA_LIMRJ</name>